<geneLocation type="plasmid">
    <name>pGGO1</name>
</geneLocation>
<reference key="1">
    <citation type="submission" date="2008-02" db="EMBL/GenBank/DDBJ databases">
        <title>Characterization of the phe-operon responsible for phenol degradation in Geobacillus stearothermophilus.</title>
        <authorList>
            <person name="Jaentges U.K."/>
            <person name="Omokoko B."/>
            <person name="Wilkening U."/>
            <person name="Reiss M."/>
            <person name="Zimmermann M."/>
            <person name="Hartmeier W."/>
        </authorList>
    </citation>
    <scope>NUCLEOTIDE SEQUENCE [GENOMIC DNA]</scope>
    <source>
        <strain>ATCC 67824 / DSM 6285 / BR219</strain>
    </source>
</reference>
<organism>
    <name type="scientific">Geobacillus stearothermophilus</name>
    <name type="common">Bacillus stearothermophilus</name>
    <dbReference type="NCBI Taxonomy" id="1422"/>
    <lineage>
        <taxon>Bacteria</taxon>
        <taxon>Bacillati</taxon>
        <taxon>Bacillota</taxon>
        <taxon>Bacilli</taxon>
        <taxon>Bacillales</taxon>
        <taxon>Anoxybacillaceae</taxon>
        <taxon>Geobacillus</taxon>
    </lineage>
</organism>
<keyword id="KW-0058">Aromatic hydrocarbons catabolism</keyword>
<keyword id="KW-0456">Lyase</keyword>
<keyword id="KW-0464">Manganese</keyword>
<keyword id="KW-0479">Metal-binding</keyword>
<keyword id="KW-0614">Plasmid</keyword>
<comment type="catalytic activity">
    <reaction evidence="1">
        <text>(S)-4-hydroxy-2-oxopentanoate = acetaldehyde + pyruvate</text>
        <dbReference type="Rhea" id="RHEA:22624"/>
        <dbReference type="ChEBI" id="CHEBI:15343"/>
        <dbReference type="ChEBI" id="CHEBI:15361"/>
        <dbReference type="ChEBI" id="CHEBI:73143"/>
        <dbReference type="EC" id="4.1.3.39"/>
    </reaction>
</comment>
<comment type="similarity">
    <text evidence="1">Belongs to the 4-hydroxy-2-oxovalerate aldolase family.</text>
</comment>
<accession>B0VXM7</accession>
<name>HOA_GEOSE</name>
<gene>
    <name type="primary">pheE</name>
</gene>
<sequence length="342" mass="36676">MAKKRDVWITEVALRDGSHAVAHQYTVEQVVKIAKALDEANVPYIEVAHGDGLAGSSLQYGLSRTNELELIEAAVSVCKQSKIAVLLLPGIGTMKDLQQVAGLGAKMARIATHVTEADVSAQHIGLAKELGMETVGFLMMAHMAPVEKLVEQAKLMESYGADAVYVVDSAGALLPHEVRDRIRALKQHVGVEIGFHGHNNLSLAMANSLVAIEEGATRIDGSVRCLGAGAGNTQTEVLVAVLDRLGVKTGIDLYKMMDLAEEIVAPMLPAPQEITRDSLVLGYAGVYSSFLLHARRIAEKLGMDARDILVELGKRKVVGGQEDMIVDVAVEMAKKRAESLVQ</sequence>
<evidence type="ECO:0000255" key="1">
    <source>
        <dbReference type="HAMAP-Rule" id="MF_01656"/>
    </source>
</evidence>
<protein>
    <recommendedName>
        <fullName evidence="1">4-hydroxy-2-oxovalerate aldolase</fullName>
        <shortName evidence="1">HOA</shortName>
        <ecNumber evidence="1">4.1.3.39</ecNumber>
    </recommendedName>
    <alternativeName>
        <fullName evidence="1">4-hydroxy-2-keto-pentanoic acid aldolase</fullName>
    </alternativeName>
    <alternativeName>
        <fullName evidence="1">4-hydroxy-2-oxopentanoate aldolase</fullName>
    </alternativeName>
</protein>
<proteinExistence type="inferred from homology"/>
<dbReference type="EC" id="4.1.3.39" evidence="1"/>
<dbReference type="EMBL" id="DQ146476">
    <property type="protein sequence ID" value="ACA01539.1"/>
    <property type="molecule type" value="Genomic_DNA"/>
</dbReference>
<dbReference type="SMR" id="B0VXM7"/>
<dbReference type="GO" id="GO:0003852">
    <property type="term" value="F:2-isopropylmalate synthase activity"/>
    <property type="evidence" value="ECO:0007669"/>
    <property type="project" value="TreeGrafter"/>
</dbReference>
<dbReference type="GO" id="GO:0008701">
    <property type="term" value="F:4-hydroxy-2-oxovalerate aldolase activity"/>
    <property type="evidence" value="ECO:0007669"/>
    <property type="project" value="UniProtKB-UniRule"/>
</dbReference>
<dbReference type="GO" id="GO:0030145">
    <property type="term" value="F:manganese ion binding"/>
    <property type="evidence" value="ECO:0007669"/>
    <property type="project" value="UniProtKB-UniRule"/>
</dbReference>
<dbReference type="GO" id="GO:0009056">
    <property type="term" value="P:catabolic process"/>
    <property type="evidence" value="ECO:0007669"/>
    <property type="project" value="UniProtKB-KW"/>
</dbReference>
<dbReference type="GO" id="GO:0009098">
    <property type="term" value="P:L-leucine biosynthetic process"/>
    <property type="evidence" value="ECO:0007669"/>
    <property type="project" value="TreeGrafter"/>
</dbReference>
<dbReference type="CDD" id="cd07943">
    <property type="entry name" value="DRE_TIM_HOA"/>
    <property type="match status" value="1"/>
</dbReference>
<dbReference type="Gene3D" id="1.10.8.60">
    <property type="match status" value="1"/>
</dbReference>
<dbReference type="Gene3D" id="3.20.20.70">
    <property type="entry name" value="Aldolase class I"/>
    <property type="match status" value="1"/>
</dbReference>
<dbReference type="HAMAP" id="MF_01656">
    <property type="entry name" value="HOA"/>
    <property type="match status" value="1"/>
</dbReference>
<dbReference type="InterPro" id="IPR050073">
    <property type="entry name" value="2-IPM_HCS-like"/>
</dbReference>
<dbReference type="InterPro" id="IPR017629">
    <property type="entry name" value="4OH_2_O-val_aldolase"/>
</dbReference>
<dbReference type="InterPro" id="IPR013785">
    <property type="entry name" value="Aldolase_TIM"/>
</dbReference>
<dbReference type="InterPro" id="IPR012425">
    <property type="entry name" value="DmpG_comm"/>
</dbReference>
<dbReference type="InterPro" id="IPR035685">
    <property type="entry name" value="DRE_TIM_HOA"/>
</dbReference>
<dbReference type="InterPro" id="IPR000891">
    <property type="entry name" value="PYR_CT"/>
</dbReference>
<dbReference type="NCBIfam" id="TIGR03217">
    <property type="entry name" value="4OH_2_O_val_ald"/>
    <property type="match status" value="1"/>
</dbReference>
<dbReference type="NCBIfam" id="NF006049">
    <property type="entry name" value="PRK08195.1"/>
    <property type="match status" value="1"/>
</dbReference>
<dbReference type="PANTHER" id="PTHR10277:SF9">
    <property type="entry name" value="2-ISOPROPYLMALATE SYNTHASE 1, CHLOROPLASTIC-RELATED"/>
    <property type="match status" value="1"/>
</dbReference>
<dbReference type="PANTHER" id="PTHR10277">
    <property type="entry name" value="HOMOCITRATE SYNTHASE-RELATED"/>
    <property type="match status" value="1"/>
</dbReference>
<dbReference type="Pfam" id="PF07836">
    <property type="entry name" value="DmpG_comm"/>
    <property type="match status" value="1"/>
</dbReference>
<dbReference type="Pfam" id="PF00682">
    <property type="entry name" value="HMGL-like"/>
    <property type="match status" value="1"/>
</dbReference>
<dbReference type="SUPFAM" id="SSF51569">
    <property type="entry name" value="Aldolase"/>
    <property type="match status" value="1"/>
</dbReference>
<dbReference type="SUPFAM" id="SSF89000">
    <property type="entry name" value="post-HMGL domain-like"/>
    <property type="match status" value="1"/>
</dbReference>
<dbReference type="PROSITE" id="PS50991">
    <property type="entry name" value="PYR_CT"/>
    <property type="match status" value="1"/>
</dbReference>
<feature type="chain" id="PRO_0000387790" description="4-hydroxy-2-oxovalerate aldolase">
    <location>
        <begin position="1"/>
        <end position="342"/>
    </location>
</feature>
<feature type="domain" description="Pyruvate carboxyltransferase" evidence="1">
    <location>
        <begin position="7"/>
        <end position="257"/>
    </location>
</feature>
<feature type="active site" description="Proton acceptor" evidence="1">
    <location>
        <position position="19"/>
    </location>
</feature>
<feature type="binding site" evidence="1">
    <location>
        <begin position="15"/>
        <end position="16"/>
    </location>
    <ligand>
        <name>substrate</name>
    </ligand>
</feature>
<feature type="binding site" evidence="1">
    <location>
        <position position="16"/>
    </location>
    <ligand>
        <name>Mn(2+)</name>
        <dbReference type="ChEBI" id="CHEBI:29035"/>
    </ligand>
</feature>
<feature type="binding site" evidence="1">
    <location>
        <position position="169"/>
    </location>
    <ligand>
        <name>substrate</name>
    </ligand>
</feature>
<feature type="binding site" evidence="1">
    <location>
        <position position="196"/>
    </location>
    <ligand>
        <name>Mn(2+)</name>
        <dbReference type="ChEBI" id="CHEBI:29035"/>
    </ligand>
</feature>
<feature type="binding site" evidence="1">
    <location>
        <position position="196"/>
    </location>
    <ligand>
        <name>substrate</name>
    </ligand>
</feature>
<feature type="binding site" evidence="1">
    <location>
        <position position="198"/>
    </location>
    <ligand>
        <name>Mn(2+)</name>
        <dbReference type="ChEBI" id="CHEBI:29035"/>
    </ligand>
</feature>
<feature type="binding site" evidence="1">
    <location>
        <position position="287"/>
    </location>
    <ligand>
        <name>substrate</name>
    </ligand>
</feature>
<feature type="site" description="Transition state stabilizer" evidence="1">
    <location>
        <position position="15"/>
    </location>
</feature>